<reference key="1">
    <citation type="journal article" date="2018" name="Int. J. Biol. Macromol.">
        <title>RK, the first scorpion peptide with dual disintegrin activity on alpha1/beta1 and alphav/beta3 integrins.</title>
        <authorList>
            <person name="Khamessi O."/>
            <person name="Ben Mabrouk H."/>
            <person name="Othman H."/>
            <person name="ElFessi-Magouri R."/>
            <person name="De Waard M."/>
            <person name="Hafedh M."/>
            <person name="Marrakchi N."/>
            <person name="Srairi-Abid N."/>
            <person name="Kharrat R."/>
        </authorList>
    </citation>
    <scope>PROTEIN SEQUENCE</scope>
    <scope>FUNCTION</scope>
    <scope>SUBCELLULAR LOCATION</scope>
    <scope>MASS SPECTROMETRY</scope>
    <scope>SYNTHESIS</scope>
    <scope>DISULFIDE BOND</scope>
    <scope>3D-STRUCTURE MODELING</scope>
    <source>
        <tissue>Venom</tissue>
    </source>
</reference>
<accession>C0HLZ7</accession>
<accession>P0DQU8</accession>
<organism>
    <name type="scientific">Buthus occitanus tunetanus</name>
    <name type="common">Common European scorpion</name>
    <name type="synonym">Buthus tunetanus</name>
    <dbReference type="NCBI Taxonomy" id="6871"/>
    <lineage>
        <taxon>Eukaryota</taxon>
        <taxon>Metazoa</taxon>
        <taxon>Ecdysozoa</taxon>
        <taxon>Arthropoda</taxon>
        <taxon>Chelicerata</taxon>
        <taxon>Arachnida</taxon>
        <taxon>Scorpiones</taxon>
        <taxon>Buthida</taxon>
        <taxon>Buthoidea</taxon>
        <taxon>Buthidae</taxon>
        <taxon>Buthus</taxon>
    </lineage>
</organism>
<protein>
    <recommendedName>
        <fullName evidence="2">RK peptide</fullName>
    </recommendedName>
    <alternativeName>
        <fullName evidence="2">Disintegrin-like peptide</fullName>
    </alternativeName>
</protein>
<dbReference type="GO" id="GO:0005576">
    <property type="term" value="C:extracellular region"/>
    <property type="evidence" value="ECO:0007669"/>
    <property type="project" value="UniProtKB-SubCell"/>
</dbReference>
<dbReference type="GO" id="GO:0090729">
    <property type="term" value="F:toxin activity"/>
    <property type="evidence" value="ECO:0007669"/>
    <property type="project" value="UniProtKB-KW"/>
</dbReference>
<sequence length="17" mass="1782">IDCGTVMIPSECDPKSS</sequence>
<keyword id="KW-1217">Cell adhesion impairing toxin</keyword>
<keyword id="KW-0903">Direct protein sequencing</keyword>
<keyword id="KW-1015">Disulfide bond</keyword>
<keyword id="KW-0964">Secreted</keyword>
<keyword id="KW-0800">Toxin</keyword>
<proteinExistence type="evidence at protein level"/>
<evidence type="ECO:0000269" key="1">
    <source>
    </source>
</evidence>
<evidence type="ECO:0000303" key="2">
    <source>
    </source>
</evidence>
<evidence type="ECO:0000305" key="3"/>
<evidence type="ECO:0000305" key="4">
    <source>
    </source>
</evidence>
<name>DIRK_BUTOC</name>
<feature type="peptide" id="PRO_0000455250" description="RK peptide">
    <location>
        <begin position="1"/>
        <end position="17"/>
    </location>
</feature>
<feature type="short sequence motif" description="D/ECD-tripeptide" evidence="4">
    <location>
        <begin position="11"/>
        <end position="13"/>
    </location>
</feature>
<feature type="disulfide bond" evidence="1">
    <location>
        <begin position="3"/>
        <end position="12"/>
    </location>
</feature>
<comment type="function">
    <text evidence="1">Venom protein with disintegrin activity (PubMed:30287364). Interacts with both alpha-1/beta-1 (ITGA1/ITGB1) and alpha-v/beta-3 (ITGAV/ITGB3) with a more pronounced effect for alpha-1/beta-1 (ITGA1/ITGB1) (PubMed:30287364). Inhibits the cell adhesion of the human glioblastoma cell line U87 and the melanoma cell line IGR39 to fibrinogen and fibronectin. Also inhibits cell adhesion of the rat pheochromocytoma cell line PC12 to type IV collagen.</text>
</comment>
<comment type="subcellular location">
    <subcellularLocation>
        <location evidence="1">Secreted</location>
    </subcellularLocation>
</comment>
<comment type="tissue specificity">
    <text evidence="4">Expressed by the venom gland.</text>
</comment>
<comment type="mass spectrometry" mass="1780.03" method="MALDI" evidence="1"/>
<comment type="miscellaneous">
    <text evidence="1">Negative results: does not affect the viability of U87, IGR-39 and PC12 cell lines at 100 uM after 24, 48 or 72 hours incubation time. Does not inhibit cell adhesion of the human glioblastoma cell line U87 and the melanoma cell line IGR39 to collagen IV or laminin. In vivo, does not show toxicity on mice by intracerebroventricular injection.</text>
</comment>
<comment type="similarity">
    <text evidence="3">Belongs to the disintegrin-like family.</text>
</comment>